<sequence length="309" mass="33118">MTQDLPTPRGRLTPDKDLSGLTWLRVGGPADWLFQPADVDDLCAFMAELDPAVPVFPMGVGSNLIVRDGGLRGVVIKLGRPFMDISVEGDRITAGAAVLDARLAKEAADAGVDLTFLRTIPGSLGGALKMNAGCYGSYVADHFVGAQAVLRDGTQVTLTRDDITFAYRQTDIPEGVTITSVTLQGNREDSRVLHTRMEEQLAKRDATQPTKALTAGSTFRNPAGFSSTGQADDTHELKAWKVIDDAGMRGATRGGAQMSEMHSNFLVNKGGATAADLEGLGEEVRKRVFQTQGIDLVWEIMRVGVPEET</sequence>
<evidence type="ECO:0000255" key="1">
    <source>
        <dbReference type="HAMAP-Rule" id="MF_00037"/>
    </source>
</evidence>
<evidence type="ECO:0000256" key="2">
    <source>
        <dbReference type="SAM" id="MobiDB-lite"/>
    </source>
</evidence>
<comment type="function">
    <text evidence="1">Cell wall formation.</text>
</comment>
<comment type="catalytic activity">
    <reaction evidence="1">
        <text>UDP-N-acetyl-alpha-D-muramate + NADP(+) = UDP-N-acetyl-3-O-(1-carboxyvinyl)-alpha-D-glucosamine + NADPH + H(+)</text>
        <dbReference type="Rhea" id="RHEA:12248"/>
        <dbReference type="ChEBI" id="CHEBI:15378"/>
        <dbReference type="ChEBI" id="CHEBI:57783"/>
        <dbReference type="ChEBI" id="CHEBI:58349"/>
        <dbReference type="ChEBI" id="CHEBI:68483"/>
        <dbReference type="ChEBI" id="CHEBI:70757"/>
        <dbReference type="EC" id="1.3.1.98"/>
    </reaction>
</comment>
<comment type="cofactor">
    <cofactor evidence="1">
        <name>FAD</name>
        <dbReference type="ChEBI" id="CHEBI:57692"/>
    </cofactor>
</comment>
<comment type="pathway">
    <text evidence="1">Cell wall biogenesis; peptidoglycan biosynthesis.</text>
</comment>
<comment type="subcellular location">
    <subcellularLocation>
        <location evidence="1">Cytoplasm</location>
    </subcellularLocation>
</comment>
<comment type="similarity">
    <text evidence="1">Belongs to the MurB family.</text>
</comment>
<keyword id="KW-0131">Cell cycle</keyword>
<keyword id="KW-0132">Cell division</keyword>
<keyword id="KW-0133">Cell shape</keyword>
<keyword id="KW-0961">Cell wall biogenesis/degradation</keyword>
<keyword id="KW-0963">Cytoplasm</keyword>
<keyword id="KW-0274">FAD</keyword>
<keyword id="KW-0285">Flavoprotein</keyword>
<keyword id="KW-0521">NADP</keyword>
<keyword id="KW-0560">Oxidoreductase</keyword>
<keyword id="KW-0573">Peptidoglycan synthesis</keyword>
<keyword id="KW-1185">Reference proteome</keyword>
<accession>Q28NP1</accession>
<proteinExistence type="inferred from homology"/>
<organism>
    <name type="scientific">Jannaschia sp. (strain CCS1)</name>
    <dbReference type="NCBI Taxonomy" id="290400"/>
    <lineage>
        <taxon>Bacteria</taxon>
        <taxon>Pseudomonadati</taxon>
        <taxon>Pseudomonadota</taxon>
        <taxon>Alphaproteobacteria</taxon>
        <taxon>Rhodobacterales</taxon>
        <taxon>Roseobacteraceae</taxon>
        <taxon>Jannaschia</taxon>
    </lineage>
</organism>
<dbReference type="EC" id="1.3.1.98" evidence="1"/>
<dbReference type="EMBL" id="CP000264">
    <property type="protein sequence ID" value="ABD55671.1"/>
    <property type="molecule type" value="Genomic_DNA"/>
</dbReference>
<dbReference type="RefSeq" id="WP_011455875.1">
    <property type="nucleotide sequence ID" value="NC_007802.1"/>
</dbReference>
<dbReference type="SMR" id="Q28NP1"/>
<dbReference type="STRING" id="290400.Jann_2754"/>
<dbReference type="KEGG" id="jan:Jann_2754"/>
<dbReference type="eggNOG" id="COG0812">
    <property type="taxonomic scope" value="Bacteria"/>
</dbReference>
<dbReference type="HOGENOM" id="CLU_035304_1_0_5"/>
<dbReference type="OrthoDB" id="9804753at2"/>
<dbReference type="UniPathway" id="UPA00219"/>
<dbReference type="Proteomes" id="UP000008326">
    <property type="component" value="Chromosome"/>
</dbReference>
<dbReference type="GO" id="GO:0005829">
    <property type="term" value="C:cytosol"/>
    <property type="evidence" value="ECO:0007669"/>
    <property type="project" value="TreeGrafter"/>
</dbReference>
<dbReference type="GO" id="GO:0071949">
    <property type="term" value="F:FAD binding"/>
    <property type="evidence" value="ECO:0007669"/>
    <property type="project" value="InterPro"/>
</dbReference>
<dbReference type="GO" id="GO:0008762">
    <property type="term" value="F:UDP-N-acetylmuramate dehydrogenase activity"/>
    <property type="evidence" value="ECO:0007669"/>
    <property type="project" value="UniProtKB-UniRule"/>
</dbReference>
<dbReference type="GO" id="GO:0051301">
    <property type="term" value="P:cell division"/>
    <property type="evidence" value="ECO:0007669"/>
    <property type="project" value="UniProtKB-KW"/>
</dbReference>
<dbReference type="GO" id="GO:0071555">
    <property type="term" value="P:cell wall organization"/>
    <property type="evidence" value="ECO:0007669"/>
    <property type="project" value="UniProtKB-KW"/>
</dbReference>
<dbReference type="GO" id="GO:0009252">
    <property type="term" value="P:peptidoglycan biosynthetic process"/>
    <property type="evidence" value="ECO:0007669"/>
    <property type="project" value="UniProtKB-UniRule"/>
</dbReference>
<dbReference type="GO" id="GO:0008360">
    <property type="term" value="P:regulation of cell shape"/>
    <property type="evidence" value="ECO:0007669"/>
    <property type="project" value="UniProtKB-KW"/>
</dbReference>
<dbReference type="Gene3D" id="3.30.465.10">
    <property type="match status" value="1"/>
</dbReference>
<dbReference type="Gene3D" id="3.90.78.10">
    <property type="entry name" value="UDP-N-acetylenolpyruvoylglucosamine reductase, C-terminal domain"/>
    <property type="match status" value="1"/>
</dbReference>
<dbReference type="Gene3D" id="3.30.43.10">
    <property type="entry name" value="Uridine Diphospho-n-acetylenolpyruvylglucosamine Reductase, domain 2"/>
    <property type="match status" value="1"/>
</dbReference>
<dbReference type="HAMAP" id="MF_00037">
    <property type="entry name" value="MurB"/>
    <property type="match status" value="1"/>
</dbReference>
<dbReference type="InterPro" id="IPR016166">
    <property type="entry name" value="FAD-bd_PCMH"/>
</dbReference>
<dbReference type="InterPro" id="IPR036318">
    <property type="entry name" value="FAD-bd_PCMH-like_sf"/>
</dbReference>
<dbReference type="InterPro" id="IPR016167">
    <property type="entry name" value="FAD-bd_PCMH_sub1"/>
</dbReference>
<dbReference type="InterPro" id="IPR016169">
    <property type="entry name" value="FAD-bd_PCMH_sub2"/>
</dbReference>
<dbReference type="InterPro" id="IPR003170">
    <property type="entry name" value="MurB"/>
</dbReference>
<dbReference type="InterPro" id="IPR011601">
    <property type="entry name" value="MurB_C"/>
</dbReference>
<dbReference type="InterPro" id="IPR036635">
    <property type="entry name" value="MurB_C_sf"/>
</dbReference>
<dbReference type="InterPro" id="IPR006094">
    <property type="entry name" value="Oxid_FAD_bind_N"/>
</dbReference>
<dbReference type="NCBIfam" id="TIGR00179">
    <property type="entry name" value="murB"/>
    <property type="match status" value="1"/>
</dbReference>
<dbReference type="NCBIfam" id="NF010480">
    <property type="entry name" value="PRK13905.1"/>
    <property type="match status" value="1"/>
</dbReference>
<dbReference type="PANTHER" id="PTHR21071">
    <property type="entry name" value="UDP-N-ACETYLENOLPYRUVOYLGLUCOSAMINE REDUCTASE"/>
    <property type="match status" value="1"/>
</dbReference>
<dbReference type="PANTHER" id="PTHR21071:SF4">
    <property type="entry name" value="UDP-N-ACETYLENOLPYRUVOYLGLUCOSAMINE REDUCTASE"/>
    <property type="match status" value="1"/>
</dbReference>
<dbReference type="Pfam" id="PF01565">
    <property type="entry name" value="FAD_binding_4"/>
    <property type="match status" value="1"/>
</dbReference>
<dbReference type="Pfam" id="PF02873">
    <property type="entry name" value="MurB_C"/>
    <property type="match status" value="1"/>
</dbReference>
<dbReference type="SUPFAM" id="SSF56176">
    <property type="entry name" value="FAD-binding/transporter-associated domain-like"/>
    <property type="match status" value="1"/>
</dbReference>
<dbReference type="SUPFAM" id="SSF56194">
    <property type="entry name" value="Uridine diphospho-N-Acetylenolpyruvylglucosamine reductase, MurB, C-terminal domain"/>
    <property type="match status" value="1"/>
</dbReference>
<dbReference type="PROSITE" id="PS51387">
    <property type="entry name" value="FAD_PCMH"/>
    <property type="match status" value="1"/>
</dbReference>
<reference key="1">
    <citation type="submission" date="2006-02" db="EMBL/GenBank/DDBJ databases">
        <title>Complete sequence of chromosome of Jannaschia sp. CCS1.</title>
        <authorList>
            <consortium name="US DOE Joint Genome Institute"/>
            <person name="Copeland A."/>
            <person name="Lucas S."/>
            <person name="Lapidus A."/>
            <person name="Barry K."/>
            <person name="Detter J.C."/>
            <person name="Glavina del Rio T."/>
            <person name="Hammon N."/>
            <person name="Israni S."/>
            <person name="Pitluck S."/>
            <person name="Brettin T."/>
            <person name="Bruce D."/>
            <person name="Han C."/>
            <person name="Tapia R."/>
            <person name="Gilna P."/>
            <person name="Chertkov O."/>
            <person name="Saunders E."/>
            <person name="Schmutz J."/>
            <person name="Larimer F."/>
            <person name="Land M."/>
            <person name="Kyrpides N."/>
            <person name="Lykidis A."/>
            <person name="Moran M.A."/>
            <person name="Belas R."/>
            <person name="Ye W."/>
            <person name="Buchan A."/>
            <person name="Gonzalez J.M."/>
            <person name="Schell M.A."/>
            <person name="Richardson P."/>
        </authorList>
    </citation>
    <scope>NUCLEOTIDE SEQUENCE [LARGE SCALE GENOMIC DNA]</scope>
    <source>
        <strain>CCS1</strain>
    </source>
</reference>
<gene>
    <name evidence="1" type="primary">murB</name>
    <name type="ordered locus">Jann_2754</name>
</gene>
<name>MURB_JANSC</name>
<protein>
    <recommendedName>
        <fullName evidence="1">UDP-N-acetylenolpyruvoylglucosamine reductase</fullName>
        <ecNumber evidence="1">1.3.1.98</ecNumber>
    </recommendedName>
    <alternativeName>
        <fullName evidence="1">UDP-N-acetylmuramate dehydrogenase</fullName>
    </alternativeName>
</protein>
<feature type="chain" id="PRO_0000332464" description="UDP-N-acetylenolpyruvoylglucosamine reductase">
    <location>
        <begin position="1"/>
        <end position="309"/>
    </location>
</feature>
<feature type="domain" description="FAD-binding PCMH-type" evidence="1">
    <location>
        <begin position="25"/>
        <end position="188"/>
    </location>
</feature>
<feature type="region of interest" description="Disordered" evidence="2">
    <location>
        <begin position="202"/>
        <end position="231"/>
    </location>
</feature>
<feature type="compositionally biased region" description="Polar residues" evidence="2">
    <location>
        <begin position="207"/>
        <end position="231"/>
    </location>
</feature>
<feature type="active site" evidence="1">
    <location>
        <position position="168"/>
    </location>
</feature>
<feature type="active site" description="Proton donor" evidence="1">
    <location>
        <position position="217"/>
    </location>
</feature>
<feature type="active site" evidence="1">
    <location>
        <position position="299"/>
    </location>
</feature>